<comment type="function">
    <text evidence="2 3">Key decatenating enzyme that alters DNA topology by binding to two double-stranded DNA molecules, generating a double-stranded break in one of the strands, passing the intact strand through the broken strand, and religating the broken strand (By similarity). May play a role in regulating the period length of BMAL1 transcriptional oscillation (By similarity).</text>
</comment>
<comment type="catalytic activity">
    <reaction evidence="4">
        <text>ATP-dependent breakage, passage and rejoining of double-stranded DNA.</text>
        <dbReference type="EC" id="5.6.2.2"/>
    </reaction>
</comment>
<comment type="cofactor">
    <cofactor evidence="4">
        <name>Mg(2+)</name>
        <dbReference type="ChEBI" id="CHEBI:18420"/>
    </cofactor>
    <cofactor evidence="4">
        <name>Mn(2+)</name>
        <dbReference type="ChEBI" id="CHEBI:29035"/>
    </cofactor>
    <cofactor evidence="4">
        <name>Ca(2+)</name>
        <dbReference type="ChEBI" id="CHEBI:29108"/>
    </cofactor>
    <text evidence="4">Binds two Mg(2+) per subunit. The magnesium ions form salt bridges with both the protein and the DNA. Can also accept other divalent metal cations, such as Mn(2+) or Ca(2+).</text>
</comment>
<comment type="subunit">
    <text evidence="2 3 7">Homodimer (By similarity). Interacts with COPS5 (By similarity). Interacts with RECQL5; this stimulates DNA decatenation (By similarity). Interacts with SETMAR; stimulates the topoisomerase activity (By similarity). Interacts with DHX9; this interaction occurs in a E2 enzyme UBE2I- and RNA-dependent manner, negatively regulates DHX9-mediated double-stranded DNA and RNA duplex helicase activity and stimulates TOP2A-mediated supercoiled DNA relaxation activity (By similarity). Interacts with HNRNPU (via C-terminus); this interaction protects the topoisomerase TOP2A from degradation and positively regulates the relaxation of supercoiled DNA in a RNA-dependent manner (PubMed:20554522). Interacts with MCM3AP (By similarity). Interacts with ERCC6 (By similarity). Interacts with PLSCR1 (By similarity). Interacts with GCNA; this interaction allows the resolution of topoisomerase II (TOP2A) DNA-protein cross-links (By similarity). Interacts with POL1RA/RPA1 (via dock II) and UBTF in the context of Pol I complex; may assist Pol I transcription initiation by releasing supercoils occurring during DNA unwinding. Interacts with TPRN; TPRN interacts with a number of DNA damage response proteins, is recruited to sites of DNA damage and may play a role in DNA damage repair (By similarity).</text>
</comment>
<comment type="subcellular location">
    <subcellularLocation>
        <location evidence="2">Cytoplasm</location>
    </subcellularLocation>
    <subcellularLocation>
        <location evidence="2">Nucleus</location>
        <location evidence="2">Nucleoplasm</location>
    </subcellularLocation>
    <subcellularLocation>
        <location evidence="2">Nucleus</location>
    </subcellularLocation>
    <subcellularLocation>
        <location evidence="2">Nucleus</location>
        <location evidence="2">Nucleolus</location>
    </subcellularLocation>
</comment>
<comment type="PTM">
    <text evidence="2">Phosphorylation has no effect on catalytic activity.</text>
</comment>
<comment type="miscellaneous">
    <text>Eukaryotic topoisomerase I and II can relax both negative and positive supercoils, whereas prokaryotic enzymes relax only negative supercoils.</text>
</comment>
<comment type="similarity">
    <text evidence="8">Belongs to the type II topoisomerase family.</text>
</comment>
<organism>
    <name type="scientific">Rattus norvegicus</name>
    <name type="common">Rat</name>
    <dbReference type="NCBI Taxonomy" id="10116"/>
    <lineage>
        <taxon>Eukaryota</taxon>
        <taxon>Metazoa</taxon>
        <taxon>Chordata</taxon>
        <taxon>Craniata</taxon>
        <taxon>Vertebrata</taxon>
        <taxon>Euteleostomi</taxon>
        <taxon>Mammalia</taxon>
        <taxon>Eutheria</taxon>
        <taxon>Euarchontoglires</taxon>
        <taxon>Glires</taxon>
        <taxon>Rodentia</taxon>
        <taxon>Myomorpha</taxon>
        <taxon>Muroidea</taxon>
        <taxon>Muridae</taxon>
        <taxon>Murinae</taxon>
        <taxon>Rattus</taxon>
    </lineage>
</organism>
<gene>
    <name type="primary">Top2a</name>
    <name type="synonym">Top-2</name>
    <name type="synonym">Top2</name>
</gene>
<dbReference type="EC" id="5.6.2.2" evidence="4"/>
<dbReference type="EMBL" id="Z46372">
    <property type="protein sequence ID" value="CAA86496.1"/>
    <property type="molecule type" value="mRNA"/>
</dbReference>
<dbReference type="EMBL" id="Z19552">
    <property type="protein sequence ID" value="CAA79611.1"/>
    <property type="molecule type" value="mRNA"/>
</dbReference>
<dbReference type="EMBL" id="Z29676">
    <property type="status" value="NOT_ANNOTATED_CDS"/>
    <property type="molecule type" value="Genomic_DNA"/>
</dbReference>
<dbReference type="PIR" id="A48536">
    <property type="entry name" value="A48536"/>
</dbReference>
<dbReference type="PIR" id="JN0598">
    <property type="entry name" value="JN0598"/>
</dbReference>
<dbReference type="RefSeq" id="NP_071519.2">
    <property type="nucleotide sequence ID" value="NM_022183.2"/>
</dbReference>
<dbReference type="SMR" id="P41516"/>
<dbReference type="BioGRID" id="261906">
    <property type="interactions" value="4"/>
</dbReference>
<dbReference type="FunCoup" id="P41516">
    <property type="interactions" value="1635"/>
</dbReference>
<dbReference type="IntAct" id="P41516">
    <property type="interactions" value="1"/>
</dbReference>
<dbReference type="STRING" id="10116.ENSRNOP00000069963"/>
<dbReference type="ChEMBL" id="CHEMBL3400"/>
<dbReference type="iPTMnet" id="P41516"/>
<dbReference type="PhosphoSitePlus" id="P41516"/>
<dbReference type="PaxDb" id="10116-ENSRNOP00000040257"/>
<dbReference type="AGR" id="RGD:62048"/>
<dbReference type="RGD" id="62048">
    <property type="gene designation" value="Top2a"/>
</dbReference>
<dbReference type="eggNOG" id="KOG0355">
    <property type="taxonomic scope" value="Eukaryota"/>
</dbReference>
<dbReference type="InParanoid" id="P41516"/>
<dbReference type="PhylomeDB" id="P41516"/>
<dbReference type="BRENDA" id="5.6.2.2">
    <property type="organism ID" value="5301"/>
</dbReference>
<dbReference type="BRENDA" id="5.99.1.3">
    <property type="organism ID" value="5301"/>
</dbReference>
<dbReference type="Reactome" id="R-RNO-4615885">
    <property type="pathway name" value="SUMOylation of DNA replication proteins"/>
</dbReference>
<dbReference type="PRO" id="PR:P41516"/>
<dbReference type="Proteomes" id="UP000002494">
    <property type="component" value="Unplaced"/>
</dbReference>
<dbReference type="GO" id="GO:0005814">
    <property type="term" value="C:centriole"/>
    <property type="evidence" value="ECO:0000266"/>
    <property type="project" value="RGD"/>
</dbReference>
<dbReference type="GO" id="GO:0000775">
    <property type="term" value="C:chromosome, centromeric region"/>
    <property type="evidence" value="ECO:0000266"/>
    <property type="project" value="RGD"/>
</dbReference>
<dbReference type="GO" id="GO:0000793">
    <property type="term" value="C:condensed chromosome"/>
    <property type="evidence" value="ECO:0000266"/>
    <property type="project" value="RGD"/>
</dbReference>
<dbReference type="GO" id="GO:0005737">
    <property type="term" value="C:cytoplasm"/>
    <property type="evidence" value="ECO:0000250"/>
    <property type="project" value="UniProtKB"/>
</dbReference>
<dbReference type="GO" id="GO:0009330">
    <property type="term" value="C:DNA topoisomerase type II (double strand cut, ATP-hydrolyzing) complex"/>
    <property type="evidence" value="ECO:0000314"/>
    <property type="project" value="RGD"/>
</dbReference>
<dbReference type="GO" id="GO:0001673">
    <property type="term" value="C:male germ cell nucleus"/>
    <property type="evidence" value="ECO:0000266"/>
    <property type="project" value="RGD"/>
</dbReference>
<dbReference type="GO" id="GO:0000228">
    <property type="term" value="C:nuclear chromosome"/>
    <property type="evidence" value="ECO:0000266"/>
    <property type="project" value="RGD"/>
</dbReference>
<dbReference type="GO" id="GO:0005730">
    <property type="term" value="C:nucleolus"/>
    <property type="evidence" value="ECO:0000266"/>
    <property type="project" value="RGD"/>
</dbReference>
<dbReference type="GO" id="GO:0005654">
    <property type="term" value="C:nucleoplasm"/>
    <property type="evidence" value="ECO:0000250"/>
    <property type="project" value="UniProtKB"/>
</dbReference>
<dbReference type="GO" id="GO:0005634">
    <property type="term" value="C:nucleus"/>
    <property type="evidence" value="ECO:0000266"/>
    <property type="project" value="RGD"/>
</dbReference>
<dbReference type="GO" id="GO:0032991">
    <property type="term" value="C:protein-containing complex"/>
    <property type="evidence" value="ECO:0000266"/>
    <property type="project" value="RGD"/>
</dbReference>
<dbReference type="GO" id="GO:1990904">
    <property type="term" value="C:ribonucleoprotein complex"/>
    <property type="evidence" value="ECO:0000250"/>
    <property type="project" value="UniProtKB"/>
</dbReference>
<dbReference type="GO" id="GO:0005524">
    <property type="term" value="F:ATP binding"/>
    <property type="evidence" value="ECO:0000314"/>
    <property type="project" value="RGD"/>
</dbReference>
<dbReference type="GO" id="GO:0008094">
    <property type="term" value="F:ATP-dependent activity, acting on DNA"/>
    <property type="evidence" value="ECO:0000266"/>
    <property type="project" value="RGD"/>
</dbReference>
<dbReference type="GO" id="GO:0003682">
    <property type="term" value="F:chromatin binding"/>
    <property type="evidence" value="ECO:0000314"/>
    <property type="project" value="RGD"/>
</dbReference>
<dbReference type="GO" id="GO:0003677">
    <property type="term" value="F:DNA binding"/>
    <property type="evidence" value="ECO:0000314"/>
    <property type="project" value="RGD"/>
</dbReference>
<dbReference type="GO" id="GO:0008301">
    <property type="term" value="F:DNA binding, bending"/>
    <property type="evidence" value="ECO:0000250"/>
    <property type="project" value="UniProtKB"/>
</dbReference>
<dbReference type="GO" id="GO:0003916">
    <property type="term" value="F:DNA topoisomerase activity"/>
    <property type="evidence" value="ECO:0000314"/>
    <property type="project" value="RGD"/>
</dbReference>
<dbReference type="GO" id="GO:0003918">
    <property type="term" value="F:DNA topoisomerase type II (double strand cut, ATP-hydrolyzing) activity"/>
    <property type="evidence" value="ECO:0000314"/>
    <property type="project" value="RGD"/>
</dbReference>
<dbReference type="GO" id="GO:0000287">
    <property type="term" value="F:magnesium ion binding"/>
    <property type="evidence" value="ECO:0000250"/>
    <property type="project" value="UniProtKB"/>
</dbReference>
<dbReference type="GO" id="GO:0046982">
    <property type="term" value="F:protein heterodimerization activity"/>
    <property type="evidence" value="ECO:0000266"/>
    <property type="project" value="RGD"/>
</dbReference>
<dbReference type="GO" id="GO:0042803">
    <property type="term" value="F:protein homodimerization activity"/>
    <property type="evidence" value="ECO:0000266"/>
    <property type="project" value="RGD"/>
</dbReference>
<dbReference type="GO" id="GO:0005080">
    <property type="term" value="F:protein kinase C binding"/>
    <property type="evidence" value="ECO:0000266"/>
    <property type="project" value="RGD"/>
</dbReference>
<dbReference type="GO" id="GO:0043565">
    <property type="term" value="F:sequence-specific DNA binding"/>
    <property type="evidence" value="ECO:0000314"/>
    <property type="project" value="RGD"/>
</dbReference>
<dbReference type="GO" id="GO:0043130">
    <property type="term" value="F:ubiquitin binding"/>
    <property type="evidence" value="ECO:0000266"/>
    <property type="project" value="RGD"/>
</dbReference>
<dbReference type="GO" id="GO:0030263">
    <property type="term" value="P:apoptotic chromosome condensation"/>
    <property type="evidence" value="ECO:0000266"/>
    <property type="project" value="RGD"/>
</dbReference>
<dbReference type="GO" id="GO:0021707">
    <property type="term" value="P:cerebellar granule cell differentiation"/>
    <property type="evidence" value="ECO:0000270"/>
    <property type="project" value="RGD"/>
</dbReference>
<dbReference type="GO" id="GO:0021702">
    <property type="term" value="P:cerebellar Purkinje cell differentiation"/>
    <property type="evidence" value="ECO:0000270"/>
    <property type="project" value="RGD"/>
</dbReference>
<dbReference type="GO" id="GO:0006325">
    <property type="term" value="P:chromatin organization"/>
    <property type="evidence" value="ECO:0000266"/>
    <property type="project" value="RGD"/>
</dbReference>
<dbReference type="GO" id="GO:0030261">
    <property type="term" value="P:chromosome condensation"/>
    <property type="evidence" value="ECO:0000266"/>
    <property type="project" value="RGD"/>
</dbReference>
<dbReference type="GO" id="GO:0007059">
    <property type="term" value="P:chromosome segregation"/>
    <property type="evidence" value="ECO:0000266"/>
    <property type="project" value="RGD"/>
</dbReference>
<dbReference type="GO" id="GO:0006974">
    <property type="term" value="P:DNA damage response"/>
    <property type="evidence" value="ECO:0000266"/>
    <property type="project" value="RGD"/>
</dbReference>
<dbReference type="GO" id="GO:0006265">
    <property type="term" value="P:DNA topological change"/>
    <property type="evidence" value="ECO:0000314"/>
    <property type="project" value="RGD"/>
</dbReference>
<dbReference type="GO" id="GO:0040016">
    <property type="term" value="P:embryonic cleavage"/>
    <property type="evidence" value="ECO:0000266"/>
    <property type="project" value="RGD"/>
</dbReference>
<dbReference type="GO" id="GO:0007143">
    <property type="term" value="P:female meiotic nuclear division"/>
    <property type="evidence" value="ECO:0000266"/>
    <property type="project" value="RGD"/>
</dbReference>
<dbReference type="GO" id="GO:0002244">
    <property type="term" value="P:hematopoietic progenitor cell differentiation"/>
    <property type="evidence" value="ECO:0000266"/>
    <property type="project" value="RGD"/>
</dbReference>
<dbReference type="GO" id="GO:0043065">
    <property type="term" value="P:positive regulation of apoptotic process"/>
    <property type="evidence" value="ECO:0000266"/>
    <property type="project" value="RGD"/>
</dbReference>
<dbReference type="GO" id="GO:0045870">
    <property type="term" value="P:positive regulation of single stranded viral RNA replication via double stranded DNA intermediate"/>
    <property type="evidence" value="ECO:0000266"/>
    <property type="project" value="RGD"/>
</dbReference>
<dbReference type="GO" id="GO:0045944">
    <property type="term" value="P:positive regulation of transcription by RNA polymerase II"/>
    <property type="evidence" value="ECO:0000266"/>
    <property type="project" value="RGD"/>
</dbReference>
<dbReference type="GO" id="GO:0042752">
    <property type="term" value="P:regulation of circadian rhythm"/>
    <property type="evidence" value="ECO:0000250"/>
    <property type="project" value="UniProtKB"/>
</dbReference>
<dbReference type="GO" id="GO:0000712">
    <property type="term" value="P:resolution of meiotic recombination intermediates"/>
    <property type="evidence" value="ECO:0000318"/>
    <property type="project" value="GO_Central"/>
</dbReference>
<dbReference type="GO" id="GO:0010212">
    <property type="term" value="P:response to ionizing radiation"/>
    <property type="evidence" value="ECO:0000270"/>
    <property type="project" value="RGD"/>
</dbReference>
<dbReference type="GO" id="GO:0071107">
    <property type="term" value="P:response to parathyroid hormone"/>
    <property type="evidence" value="ECO:0000270"/>
    <property type="project" value="RGD"/>
</dbReference>
<dbReference type="GO" id="GO:0009410">
    <property type="term" value="P:response to xenobiotic stimulus"/>
    <property type="evidence" value="ECO:0000270"/>
    <property type="project" value="RGD"/>
</dbReference>
<dbReference type="GO" id="GO:0048511">
    <property type="term" value="P:rhythmic process"/>
    <property type="evidence" value="ECO:0007669"/>
    <property type="project" value="UniProtKB-KW"/>
</dbReference>
<dbReference type="GO" id="GO:0000819">
    <property type="term" value="P:sister chromatid segregation"/>
    <property type="evidence" value="ECO:0000318"/>
    <property type="project" value="GO_Central"/>
</dbReference>
<dbReference type="CDD" id="cd16930">
    <property type="entry name" value="HATPase_TopII-like"/>
    <property type="match status" value="1"/>
</dbReference>
<dbReference type="CDD" id="cd00187">
    <property type="entry name" value="TOP4c"/>
    <property type="match status" value="1"/>
</dbReference>
<dbReference type="CDD" id="cd03481">
    <property type="entry name" value="TopoIIA_Trans_ScTopoIIA"/>
    <property type="match status" value="1"/>
</dbReference>
<dbReference type="CDD" id="cd03365">
    <property type="entry name" value="TOPRIM_TopoIIA"/>
    <property type="match status" value="1"/>
</dbReference>
<dbReference type="FunFam" id="1.10.268.10:FF:000002">
    <property type="entry name" value="DNA topoisomerase 2"/>
    <property type="match status" value="1"/>
</dbReference>
<dbReference type="FunFam" id="3.30.1360.40:FF:000003">
    <property type="entry name" value="DNA topoisomerase 2"/>
    <property type="match status" value="1"/>
</dbReference>
<dbReference type="FunFam" id="3.30.1490.30:FF:000001">
    <property type="entry name" value="DNA topoisomerase 2"/>
    <property type="match status" value="1"/>
</dbReference>
<dbReference type="FunFam" id="3.30.230.10:FF:000008">
    <property type="entry name" value="DNA topoisomerase 2"/>
    <property type="match status" value="1"/>
</dbReference>
<dbReference type="FunFam" id="3.30.565.10:FF:000004">
    <property type="entry name" value="DNA topoisomerase 2"/>
    <property type="match status" value="1"/>
</dbReference>
<dbReference type="FunFam" id="3.40.50.670:FF:000001">
    <property type="entry name" value="DNA topoisomerase 2"/>
    <property type="match status" value="2"/>
</dbReference>
<dbReference type="FunFam" id="3.90.199.10:FF:000002">
    <property type="entry name" value="DNA topoisomerase 2"/>
    <property type="match status" value="1"/>
</dbReference>
<dbReference type="Gene3D" id="3.30.1360.40">
    <property type="match status" value="1"/>
</dbReference>
<dbReference type="Gene3D" id="3.30.1490.30">
    <property type="match status" value="1"/>
</dbReference>
<dbReference type="Gene3D" id="3.30.230.10">
    <property type="match status" value="1"/>
</dbReference>
<dbReference type="Gene3D" id="3.40.50.670">
    <property type="match status" value="1"/>
</dbReference>
<dbReference type="Gene3D" id="3.30.565.10">
    <property type="entry name" value="Histidine kinase-like ATPase, C-terminal domain"/>
    <property type="match status" value="1"/>
</dbReference>
<dbReference type="Gene3D" id="3.90.199.10">
    <property type="entry name" value="Topoisomerase II, domain 5"/>
    <property type="match status" value="1"/>
</dbReference>
<dbReference type="Gene3D" id="1.10.268.10">
    <property type="entry name" value="Topoisomerase, domain 3"/>
    <property type="match status" value="1"/>
</dbReference>
<dbReference type="InterPro" id="IPR050634">
    <property type="entry name" value="DNA_Topoisomerase_II"/>
</dbReference>
<dbReference type="InterPro" id="IPR012542">
    <property type="entry name" value="DTHCT"/>
</dbReference>
<dbReference type="InterPro" id="IPR036890">
    <property type="entry name" value="HATPase_C_sf"/>
</dbReference>
<dbReference type="InterPro" id="IPR020568">
    <property type="entry name" value="Ribosomal_Su5_D2-typ_SF"/>
</dbReference>
<dbReference type="InterPro" id="IPR014721">
    <property type="entry name" value="Ribsml_uS5_D2-typ_fold_subgr"/>
</dbReference>
<dbReference type="InterPro" id="IPR001241">
    <property type="entry name" value="Topo_IIA"/>
</dbReference>
<dbReference type="InterPro" id="IPR013760">
    <property type="entry name" value="Topo_IIA-like_dom_sf"/>
</dbReference>
<dbReference type="InterPro" id="IPR013758">
    <property type="entry name" value="Topo_IIA_A/C_ab"/>
</dbReference>
<dbReference type="InterPro" id="IPR013757">
    <property type="entry name" value="Topo_IIA_A_a_sf"/>
</dbReference>
<dbReference type="InterPro" id="IPR013759">
    <property type="entry name" value="Topo_IIA_B_C"/>
</dbReference>
<dbReference type="InterPro" id="IPR013506">
    <property type="entry name" value="Topo_IIA_bsu_dom2"/>
</dbReference>
<dbReference type="InterPro" id="IPR002205">
    <property type="entry name" value="Topo_IIA_dom_A"/>
</dbReference>
<dbReference type="InterPro" id="IPR001154">
    <property type="entry name" value="TopoII_euk"/>
</dbReference>
<dbReference type="InterPro" id="IPR018522">
    <property type="entry name" value="TopoIIA_CS"/>
</dbReference>
<dbReference type="InterPro" id="IPR031660">
    <property type="entry name" value="TOPRIM_C"/>
</dbReference>
<dbReference type="InterPro" id="IPR006171">
    <property type="entry name" value="TOPRIM_dom"/>
</dbReference>
<dbReference type="InterPro" id="IPR034157">
    <property type="entry name" value="TOPRIM_TopoII"/>
</dbReference>
<dbReference type="PANTHER" id="PTHR10169:SF61">
    <property type="entry name" value="DNA TOPOISOMERASE 2-ALPHA"/>
    <property type="match status" value="1"/>
</dbReference>
<dbReference type="PANTHER" id="PTHR10169">
    <property type="entry name" value="DNA TOPOISOMERASE/GYRASE"/>
    <property type="match status" value="1"/>
</dbReference>
<dbReference type="Pfam" id="PF00204">
    <property type="entry name" value="DNA_gyraseB"/>
    <property type="match status" value="1"/>
</dbReference>
<dbReference type="Pfam" id="PF00521">
    <property type="entry name" value="DNA_topoisoIV"/>
    <property type="match status" value="1"/>
</dbReference>
<dbReference type="Pfam" id="PF08070">
    <property type="entry name" value="DTHCT"/>
    <property type="match status" value="1"/>
</dbReference>
<dbReference type="Pfam" id="PF02518">
    <property type="entry name" value="HATPase_c"/>
    <property type="match status" value="1"/>
</dbReference>
<dbReference type="Pfam" id="PF01751">
    <property type="entry name" value="Toprim"/>
    <property type="match status" value="1"/>
</dbReference>
<dbReference type="Pfam" id="PF16898">
    <property type="entry name" value="TOPRIM_C"/>
    <property type="match status" value="1"/>
</dbReference>
<dbReference type="PRINTS" id="PR01158">
    <property type="entry name" value="TOPISMRASEII"/>
</dbReference>
<dbReference type="PRINTS" id="PR00418">
    <property type="entry name" value="TPI2FAMILY"/>
</dbReference>
<dbReference type="SMART" id="SM00433">
    <property type="entry name" value="TOP2c"/>
    <property type="match status" value="1"/>
</dbReference>
<dbReference type="SMART" id="SM00434">
    <property type="entry name" value="TOP4c"/>
    <property type="match status" value="1"/>
</dbReference>
<dbReference type="SUPFAM" id="SSF55874">
    <property type="entry name" value="ATPase domain of HSP90 chaperone/DNA topoisomerase II/histidine kinase"/>
    <property type="match status" value="1"/>
</dbReference>
<dbReference type="SUPFAM" id="SSF54211">
    <property type="entry name" value="Ribosomal protein S5 domain 2-like"/>
    <property type="match status" value="1"/>
</dbReference>
<dbReference type="SUPFAM" id="SSF56719">
    <property type="entry name" value="Type II DNA topoisomerase"/>
    <property type="match status" value="1"/>
</dbReference>
<dbReference type="PROSITE" id="PS52040">
    <property type="entry name" value="TOPO_IIA"/>
    <property type="match status" value="1"/>
</dbReference>
<dbReference type="PROSITE" id="PS00177">
    <property type="entry name" value="TOPOISOMERASE_II"/>
    <property type="match status" value="1"/>
</dbReference>
<dbReference type="PROSITE" id="PS50880">
    <property type="entry name" value="TOPRIM"/>
    <property type="match status" value="1"/>
</dbReference>
<proteinExistence type="evidence at protein level"/>
<name>TOP2A_RAT</name>
<accession>P41516</accession>
<protein>
    <recommendedName>
        <fullName>DNA topoisomerase 2-alpha</fullName>
        <ecNumber evidence="4">5.6.2.2</ecNumber>
    </recommendedName>
    <alternativeName>
        <fullName>DNA topoisomerase II, alpha isozyme</fullName>
    </alternativeName>
</protein>
<evidence type="ECO:0000250" key="1">
    <source>
        <dbReference type="UniProtKB" id="P06786"/>
    </source>
</evidence>
<evidence type="ECO:0000250" key="2">
    <source>
        <dbReference type="UniProtKB" id="P11388"/>
    </source>
</evidence>
<evidence type="ECO:0000250" key="3">
    <source>
        <dbReference type="UniProtKB" id="Q01320"/>
    </source>
</evidence>
<evidence type="ECO:0000255" key="4">
    <source>
        <dbReference type="PROSITE-ProRule" id="PRU00995"/>
    </source>
</evidence>
<evidence type="ECO:0000255" key="5">
    <source>
        <dbReference type="PROSITE-ProRule" id="PRU01384"/>
    </source>
</evidence>
<evidence type="ECO:0000256" key="6">
    <source>
        <dbReference type="SAM" id="MobiDB-lite"/>
    </source>
</evidence>
<evidence type="ECO:0000269" key="7">
    <source>
    </source>
</evidence>
<evidence type="ECO:0000305" key="8"/>
<evidence type="ECO:0007744" key="9">
    <source>
    </source>
</evidence>
<sequence length="1526" mass="173221">MELSPLQPVNENMLLNKKKNEDGKKRLSVERIYQKKTQLEHILLRPDTYIGSVELVTQQMWVYDEDVGINYREVTFVPGLYKIFDEILVNAADNKQRDPKMSCIRVTMMRNNLISIWNNGKGIPVVEHKVEKMYVPALIFGQLLTSSNYDDDEKKVTGGRNGYGAKLCNIFSTKFTVETASREYKKMFKQTWMDNMGRAGDMELKPFSGEDYTCITFQPDLSKFKMQSLDKDIVALMVRRAYDIAGSTKDVKVFLNGNRLPVKGFRSYVDMYLKDKVDETGNALKVVHEQVNPRWEVCLTMSEKGFQQISFVNSIATSKGGRHVDYVADQIVSKLVDVVKKKNKGGVAVKADQVKNHMWIFGNAVIENPTFDSQTKENMTLQAKSFGSTCQLSEKFIKAAIGCGIVESILNWVKFKAQIQLNKKCSAVKHNRIKGIPKLDDANDAGSRNSAECTLILTEGDSAKTLAVSGLGVVGRDKYGVFPLRGKILNVREASHKQIMENAEINNIIKIVGLQYKKNYEDEDSLKTLRYGKIMIMTDQDQDGSHIKGLLINFIHHNWPSLLRHRFLEEFITPIVKVSKNKQEIAFYSLPEFEEWKSTNPNHKKWKVKYYKGLGTSTSKEAKEYFANMKRHRIQFKYSGPEDDAAISLAFSKKQVDDRKEWLTNFMEDRRQRKLLGLPEDYLYGQTTMYLTYNDFINKELILFSNSDNERSIPSMVDGLKPGQRKVLFTCFKRNDKREVKVAQLAGSVAEMSSYHHGEMSLMMTIINLAQNFVGSNNLNLLQPIGQFGTRLHGGKDSASPRYIFTMLSPLARLLFPSKDDHTLRFLYDDNQRVEPEWYIPIIPMVLINGAEGIGTGWSCKIPNFDVREVVNNIRRLLDGEEPLPMLPSYKNYKGTIEELASNQYVINGEVAILNSTTIEITELPIRTWTQTYKEQVLEPMLNGTEKTPPLITDYREYHTDTTVKFVIKMTEEKLAEAERVGLHKVFKLQTSLTCNSMVLFDHVGCLKKYDTVLDILRDFFELRLKYYGLRKEWLLGMLGAESSKLNNQARFILEKIDGKIVIENKPKKELIKVLIQRGYDSDPVKAWKEAQQKVPEEEENEENEESESESTSPAAESGPTFNYLLDMPLWYLTKEKKDELCKQRDEKEQELNTLKKKTPSDLWKEDLAAFVEELEVVEAKEKQDEQVGLPGKGVKAKGKKAQISEVLPSPVGKRVIPQVTMEMRAEAEKKIRRKIKSENVEGTPAEDGAEPGLRQRLEKRQKREPGTRAKKQTTLPFKPIKKAQKQNPWSDSESDMSSNESNFDVPPREKEPRIAATKAKFTADLDSDDDFSGLDEKDEDEDFFPLDDTPPKTKMPPKNTKKALKPQKSSTSVDLESDGKDSVPASPGASAADVPAETEPSKPSSKQTVGVKRTITKGQSLTSTAGTKKRAVPKETKSDSALNAHVSKKPAPAKAKNSRKRMPSSSDSSDSEFEKAISKGATSKKLKGEERDFHVDLDDTVAPRAKSGRARKPIKYLEESDDDLF</sequence>
<keyword id="KW-0007">Acetylation</keyword>
<keyword id="KW-0067">ATP-binding</keyword>
<keyword id="KW-0090">Biological rhythms</keyword>
<keyword id="KW-0963">Cytoplasm</keyword>
<keyword id="KW-0238">DNA-binding</keyword>
<keyword id="KW-0413">Isomerase</keyword>
<keyword id="KW-1017">Isopeptide bond</keyword>
<keyword id="KW-0460">Magnesium</keyword>
<keyword id="KW-0479">Metal-binding</keyword>
<keyword id="KW-0547">Nucleotide-binding</keyword>
<keyword id="KW-0539">Nucleus</keyword>
<keyword id="KW-0597">Phosphoprotein</keyword>
<keyword id="KW-1185">Reference proteome</keyword>
<keyword id="KW-0799">Topoisomerase</keyword>
<keyword id="KW-0832">Ubl conjugation</keyword>
<reference key="1">
    <citation type="journal article" date="1993" name="Biochem. Biophys. Res. Commun.">
        <title>Nucleotide sequence analysis of the cDNA for rat DNA topoisomerase II.</title>
        <authorList>
            <person name="Park S.H."/>
            <person name="Yoon J.H."/>
            <person name="Kwon Y.D."/>
            <person name="Park S.D."/>
        </authorList>
    </citation>
    <scope>NUCLEOTIDE SEQUENCE [MRNA]</scope>
    <source>
        <strain>Sprague-Dawley</strain>
        <tissue>Testis</tissue>
    </source>
</reference>
<reference key="2">
    <citation type="journal article" date="2010" name="J. Biol. Chem.">
        <title>Regulation of DNA Topoisomerase IIbeta through RNA-dependent association with heterogeneous nuclear ribonucleoprotein U (hnRNP U).</title>
        <authorList>
            <person name="Kawano S."/>
            <person name="Miyaji M."/>
            <person name="Ichiyasu S."/>
            <person name="Tsutsui K.M."/>
            <person name="Tsutsui K."/>
        </authorList>
    </citation>
    <scope>INTERACTION WITH HNRNPU</scope>
</reference>
<reference key="3">
    <citation type="journal article" date="2012" name="Nat. Commun.">
        <title>Quantitative maps of protein phosphorylation sites across 14 different rat organs and tissues.</title>
        <authorList>
            <person name="Lundby A."/>
            <person name="Secher A."/>
            <person name="Lage K."/>
            <person name="Nordsborg N.B."/>
            <person name="Dmytriyev A."/>
            <person name="Lundby C."/>
            <person name="Olsen J.V."/>
        </authorList>
    </citation>
    <scope>PHOSPHORYLATION [LARGE SCALE ANALYSIS] AT SER-4; SER-1210; SER-1328; SER-1333; THR-1350; SER-1383 AND SER-1387</scope>
    <scope>IDENTIFICATION BY MASS SPECTROMETRY [LARGE SCALE ANALYSIS]</scope>
</reference>
<feature type="chain" id="PRO_0000145366" description="DNA topoisomerase 2-alpha">
    <location>
        <begin position="1"/>
        <end position="1526"/>
    </location>
</feature>
<feature type="domain" description="Toprim" evidence="4">
    <location>
        <begin position="453"/>
        <end position="570"/>
    </location>
</feature>
<feature type="domain" description="Topo IIA-type catalytic" evidence="5">
    <location>
        <begin position="713"/>
        <end position="1168"/>
    </location>
</feature>
<feature type="region of interest" description="Interaction with DNA" evidence="2">
    <location>
        <begin position="340"/>
        <end position="342"/>
    </location>
</feature>
<feature type="region of interest" description="Interaction with DNA" evidence="2">
    <location>
        <begin position="988"/>
        <end position="997"/>
    </location>
</feature>
<feature type="region of interest" description="Disordered" evidence="6">
    <location>
        <begin position="1087"/>
        <end position="1120"/>
    </location>
</feature>
<feature type="region of interest" description="Disordered" evidence="6">
    <location>
        <begin position="1229"/>
        <end position="1526"/>
    </location>
</feature>
<feature type="region of interest" description="Interaction with PLSCR1" evidence="2">
    <location>
        <begin position="1429"/>
        <end position="1435"/>
    </location>
</feature>
<feature type="compositionally biased region" description="Basic and acidic residues" evidence="6">
    <location>
        <begin position="1087"/>
        <end position="1096"/>
    </location>
</feature>
<feature type="compositionally biased region" description="Acidic residues" evidence="6">
    <location>
        <begin position="1097"/>
        <end position="1109"/>
    </location>
</feature>
<feature type="compositionally biased region" description="Basic and acidic residues" evidence="6">
    <location>
        <begin position="1254"/>
        <end position="1268"/>
    </location>
</feature>
<feature type="compositionally biased region" description="Acidic residues" evidence="6">
    <location>
        <begin position="1326"/>
        <end position="1346"/>
    </location>
</feature>
<feature type="compositionally biased region" description="Polar residues" evidence="6">
    <location>
        <begin position="1417"/>
        <end position="1427"/>
    </location>
</feature>
<feature type="compositionally biased region" description="Basic and acidic residues" evidence="6">
    <location>
        <begin position="1487"/>
        <end position="1498"/>
    </location>
</feature>
<feature type="active site" description="O-(5'-phospho-DNA)-tyrosine intermediate" evidence="5">
    <location>
        <position position="803"/>
    </location>
</feature>
<feature type="binding site" evidence="2">
    <location>
        <position position="90"/>
    </location>
    <ligand>
        <name>ATP</name>
        <dbReference type="ChEBI" id="CHEBI:30616"/>
    </ligand>
</feature>
<feature type="binding site" evidence="2">
    <location>
        <position position="118"/>
    </location>
    <ligand>
        <name>ATP</name>
        <dbReference type="ChEBI" id="CHEBI:30616"/>
    </ligand>
</feature>
<feature type="binding site" evidence="2">
    <location>
        <begin position="146"/>
        <end position="148"/>
    </location>
    <ligand>
        <name>ATP</name>
        <dbReference type="ChEBI" id="CHEBI:30616"/>
    </ligand>
</feature>
<feature type="binding site" evidence="2">
    <location>
        <begin position="159"/>
        <end position="166"/>
    </location>
    <ligand>
        <name>ATP</name>
        <dbReference type="ChEBI" id="CHEBI:30616"/>
    </ligand>
</feature>
<feature type="binding site" evidence="2">
    <location>
        <begin position="374"/>
        <end position="376"/>
    </location>
    <ligand>
        <name>ATP</name>
        <dbReference type="ChEBI" id="CHEBI:30616"/>
    </ligand>
</feature>
<feature type="binding site" evidence="4">
    <location>
        <position position="459"/>
    </location>
    <ligand>
        <name>Mg(2+)</name>
        <dbReference type="ChEBI" id="CHEBI:18420"/>
        <label>1</label>
        <note>catalytic</note>
    </ligand>
</feature>
<feature type="binding site" evidence="4">
    <location>
        <position position="539"/>
    </location>
    <ligand>
        <name>Mg(2+)</name>
        <dbReference type="ChEBI" id="CHEBI:18420"/>
        <label>1</label>
        <note>catalytic</note>
    </ligand>
</feature>
<feature type="binding site" evidence="4">
    <location>
        <position position="539"/>
    </location>
    <ligand>
        <name>Mg(2+)</name>
        <dbReference type="ChEBI" id="CHEBI:18420"/>
        <label>2</label>
    </ligand>
</feature>
<feature type="binding site" evidence="4">
    <location>
        <position position="541"/>
    </location>
    <ligand>
        <name>Mg(2+)</name>
        <dbReference type="ChEBI" id="CHEBI:18420"/>
        <label>2</label>
    </ligand>
</feature>
<feature type="site" description="Interaction with DNA" evidence="4">
    <location>
        <position position="487"/>
    </location>
</feature>
<feature type="site" description="Interaction with DNA" evidence="4">
    <location>
        <position position="490"/>
    </location>
</feature>
<feature type="site" description="Interaction with DNA" evidence="4">
    <location>
        <position position="659"/>
    </location>
</feature>
<feature type="site" description="Interaction with DNA" evidence="4">
    <location>
        <position position="660"/>
    </location>
</feature>
<feature type="site" description="Interaction with DNA" evidence="4">
    <location>
        <position position="721"/>
    </location>
</feature>
<feature type="site" description="Interaction with DNA" evidence="4">
    <location>
        <position position="755"/>
    </location>
</feature>
<feature type="site" description="Interaction with DNA" evidence="4">
    <location>
        <position position="761"/>
    </location>
</feature>
<feature type="site" description="Transition state stabilizer" evidence="1">
    <location>
        <position position="802"/>
    </location>
</feature>
<feature type="site" description="Important for DNA bending; intercalates between base pairs of target DNA" evidence="1">
    <location>
        <position position="854"/>
    </location>
</feature>
<feature type="site" description="Interaction with DNA" evidence="4">
    <location>
        <position position="929"/>
    </location>
</feature>
<feature type="modified residue" description="N-acetylmethionine" evidence="2">
    <location>
        <position position="1"/>
    </location>
</feature>
<feature type="modified residue" description="Phosphoserine" evidence="9">
    <location>
        <position position="4"/>
    </location>
</feature>
<feature type="modified residue" description="Phosphothreonine" evidence="2">
    <location>
        <position position="280"/>
    </location>
</feature>
<feature type="modified residue" description="Phosphoserine" evidence="9">
    <location>
        <position position="1210"/>
    </location>
</feature>
<feature type="modified residue" description="Phosphothreonine" evidence="3">
    <location>
        <position position="1244"/>
    </location>
</feature>
<feature type="modified residue" description="Phosphoserine" evidence="2">
    <location>
        <position position="1291"/>
    </location>
</feature>
<feature type="modified residue" description="Phosphoserine" evidence="2">
    <location>
        <position position="1293"/>
    </location>
</feature>
<feature type="modified residue" description="Phosphoserine" evidence="2">
    <location>
        <position position="1295"/>
    </location>
</feature>
<feature type="modified residue" description="Phosphoserine" evidence="2">
    <location>
        <position position="1298"/>
    </location>
</feature>
<feature type="modified residue" description="Phosphothreonine" evidence="3">
    <location>
        <position position="1323"/>
    </location>
</feature>
<feature type="modified residue" description="Phosphoserine" evidence="9">
    <location>
        <position position="1328"/>
    </location>
</feature>
<feature type="modified residue" description="Phosphoserine" evidence="9">
    <location>
        <position position="1333"/>
    </location>
</feature>
<feature type="modified residue" description="Phosphothreonine" evidence="9">
    <location>
        <position position="1350"/>
    </location>
</feature>
<feature type="modified residue" description="Phosphoserine" evidence="2">
    <location>
        <position position="1370"/>
    </location>
</feature>
<feature type="modified residue" description="Phosphoserine" evidence="2">
    <location>
        <position position="1373"/>
    </location>
</feature>
<feature type="modified residue" description="Phosphoserine" evidence="9">
    <location>
        <position position="1383"/>
    </location>
</feature>
<feature type="modified residue" description="Phosphoserine" evidence="9">
    <location>
        <position position="1387"/>
    </location>
</feature>
<feature type="modified residue" description="N6-acetyllysine; alternate" evidence="3">
    <location>
        <position position="1418"/>
    </location>
</feature>
<feature type="modified residue" description="N6-acetyllysine; alternate" evidence="3">
    <location>
        <position position="1438"/>
    </location>
</feature>
<feature type="modified residue" description="Phosphoserine" evidence="2">
    <location>
        <position position="1465"/>
    </location>
</feature>
<feature type="modified residue" description="Phosphoserine" evidence="2">
    <location>
        <position position="1467"/>
    </location>
</feature>
<feature type="modified residue" description="Phosphoserine" evidence="2">
    <location>
        <position position="1470"/>
    </location>
</feature>
<feature type="modified residue" description="Phosphoserine" evidence="2">
    <location>
        <position position="1472"/>
    </location>
</feature>
<feature type="modified residue" description="Phosphoserine" evidence="2">
    <location>
        <position position="1521"/>
    </location>
</feature>
<feature type="cross-link" description="Glycyl lysine isopeptide (Lys-Gly) (interchain with G-Cter in SUMO2)" evidence="2">
    <location>
        <position position="17"/>
    </location>
</feature>
<feature type="cross-link" description="Glycyl lysine isopeptide (Lys-Gly) (interchain with G-Cter in SUMO2)" evidence="2">
    <location>
        <position position="154"/>
    </location>
</feature>
<feature type="cross-link" description="Glycyl lysine isopeptide (Lys-Gly) (interchain with G-Cter in SUMO2)" evidence="2">
    <location>
        <position position="155"/>
    </location>
</feature>
<feature type="cross-link" description="Glycyl lysine isopeptide (Lys-Gly) (interchain with G-Cter in SUMO2)" evidence="2">
    <location>
        <position position="350"/>
    </location>
</feature>
<feature type="cross-link" description="Glycyl lysine isopeptide (Lys-Gly) (interchain with G-Cter in SUMO2)" evidence="2">
    <location>
        <position position="384"/>
    </location>
</feature>
<feature type="cross-link" description="Glycyl lysine isopeptide (Lys-Gly) (interchain with G-Cter in SUMO2)" evidence="2">
    <location>
        <position position="395"/>
    </location>
</feature>
<feature type="cross-link" description="Glycyl lysine isopeptide (Lys-Gly) (interchain with G-Cter in SUMO2)" evidence="2">
    <location>
        <position position="414"/>
    </location>
</feature>
<feature type="cross-link" description="Glycyl lysine isopeptide (Lys-Gly) (interchain with G-Cter in SUMO2)" evidence="2">
    <location>
        <position position="416"/>
    </location>
</feature>
<feature type="cross-link" description="Glycyl lysine isopeptide (Lys-Gly) (interchain with G-Cter in SUMO2)" evidence="2">
    <location>
        <position position="423"/>
    </location>
</feature>
<feature type="cross-link" description="Glycyl lysine isopeptide (Lys-Gly) (interchain with G-Cter in SUMO2)" evidence="2">
    <location>
        <position position="438"/>
    </location>
</feature>
<feature type="cross-link" description="Glycyl lysine isopeptide (Lys-Gly) (interchain with G-Cter in SUMO2)" evidence="2">
    <location>
        <position position="464"/>
    </location>
</feature>
<feature type="cross-link" description="Glycyl lysine isopeptide (Lys-Gly) (interchain with G-Cter in SUMO2)" evidence="2">
    <location>
        <position position="478"/>
    </location>
</feature>
<feature type="cross-link" description="Glycyl lysine isopeptide (Lys-Gly) (interchain with G-Cter in SUMO2)" evidence="2">
    <location>
        <position position="527"/>
    </location>
</feature>
<feature type="cross-link" description="Glycyl lysine isopeptide (Lys-Gly) (interchain with G-Cter in SUMO2)" evidence="2">
    <location>
        <position position="582"/>
    </location>
</feature>
<feature type="cross-link" description="Glycyl lysine isopeptide (Lys-Gly) (interchain with G-Cter in SUMO2)" evidence="2">
    <location>
        <position position="597"/>
    </location>
</feature>
<feature type="cross-link" description="Glycyl lysine isopeptide (Lys-Gly) (interchain with G-Cter in SUMO2)" evidence="2">
    <location>
        <position position="612"/>
    </location>
</feature>
<feature type="cross-link" description="Glycyl lysine isopeptide (Lys-Gly) (interchain with G-Cter in SUMO2)" evidence="2">
    <location>
        <position position="620"/>
    </location>
</feature>
<feature type="cross-link" description="Glycyl lysine isopeptide (Lys-Gly) (interchain with G-Cter in SUMO2)" evidence="2">
    <location>
        <position position="623"/>
    </location>
</feature>
<feature type="cross-link" description="Glycyl lysine isopeptide (Lys-Gly) (interchain with G-Cter in SUMO2)" evidence="2">
    <location>
        <position position="630"/>
    </location>
</feature>
<feature type="cross-link" description="Glycyl lysine isopeptide (Lys-Gly) (interchain with G-Cter in SUMO2)" evidence="2">
    <location>
        <position position="637"/>
    </location>
</feature>
<feature type="cross-link" description="Glycyl lysine isopeptide (Lys-Gly) (interchain with G-Cter in SUMO2)" evidence="2">
    <location>
        <position position="653"/>
    </location>
</feature>
<feature type="cross-link" description="Glycyl lysine isopeptide (Lys-Gly) (interchain with G-Cter in SUMO2)" evidence="2">
    <location>
        <position position="660"/>
    </location>
</feature>
<feature type="cross-link" description="Glycyl lysine isopeptide (Lys-Gly) (interchain with G-Cter in SUMO2)" evidence="2">
    <location>
        <position position="674"/>
    </location>
</feature>
<feature type="cross-link" description="Glycyl lysine isopeptide (Lys-Gly) (interchain with G-Cter in SUMO2)" evidence="2">
    <location>
        <position position="1073"/>
    </location>
</feature>
<feature type="cross-link" description="Glycyl lysine isopeptide (Lys-Gly) (interchain with G-Cter in SUMO2)" evidence="2">
    <location>
        <position position="1193"/>
    </location>
</feature>
<feature type="cross-link" description="Glycyl lysine isopeptide (Lys-Gly) (interchain with G-Cter in SUMO2)" evidence="2">
    <location>
        <position position="1201"/>
    </location>
</feature>
<feature type="cross-link" description="Glycyl lysine isopeptide (Lys-Gly) (interchain with G-Cter in SUMO1); alternate" evidence="2">
    <location>
        <position position="1237"/>
    </location>
</feature>
<feature type="cross-link" description="Glycyl lysine isopeptide (Lys-Gly) (interchain with G-Cter in SUMO2); alternate" evidence="2">
    <location>
        <position position="1237"/>
    </location>
</feature>
<feature type="cross-link" description="Glycyl lysine isopeptide (Lys-Gly) (interchain with G-Cter in SUMO2)" evidence="2">
    <location>
        <position position="1272"/>
    </location>
</feature>
<feature type="cross-link" description="Glycyl lysine isopeptide (Lys-Gly) (interchain with G-Cter in SUMO2)" evidence="2">
    <location>
        <position position="1279"/>
    </location>
</feature>
<feature type="cross-link" description="Glycyl lysine isopeptide (Lys-Gly) (interchain with G-Cter in SUMO2)" evidence="2">
    <location>
        <position position="1282"/>
    </location>
</feature>
<feature type="cross-link" description="Glycyl lysine isopeptide (Lys-Gly) (interchain with G-Cter in SUMO2)" evidence="2">
    <location>
        <position position="1359"/>
    </location>
</feature>
<feature type="cross-link" description="Glycyl lysine isopeptide (Lys-Gly) (interchain with G-Cter in SUMO2)" evidence="2">
    <location>
        <position position="1363"/>
    </location>
</feature>
<feature type="cross-link" description="Glycyl lysine isopeptide (Lys-Gly) (interchain with G-Cter in SUMO2)" evidence="2">
    <location>
        <position position="1369"/>
    </location>
</feature>
<feature type="cross-link" description="Glycyl lysine isopeptide (Lys-Gly) (interchain with G-Cter in SUMO2)" evidence="2">
    <location>
        <position position="1381"/>
    </location>
</feature>
<feature type="cross-link" description="Glycyl lysine isopeptide (Lys-Gly) (interchain with G-Cter in SUMO2); alternate" evidence="2">
    <location>
        <position position="1418"/>
    </location>
</feature>
<feature type="cross-link" description="Glycyl lysine isopeptide (Lys-Gly) (interchain with G-Cter in SUMO2); alternate" evidence="2">
    <location>
        <position position="1438"/>
    </location>
</feature>
<feature type="cross-link" description="Glycyl lysine isopeptide (Lys-Gly) (interchain with G-Cter in SUMO2)" evidence="2">
    <location>
        <position position="1450"/>
    </location>
</feature>
<feature type="cross-link" description="Glycyl lysine isopeptide (Lys-Gly) (interchain with G-Cter in SUMO2)" evidence="2">
    <location>
        <position position="1455"/>
    </location>
</feature>
<feature type="cross-link" description="Glycyl lysine isopeptide (Lys-Gly) (interchain with G-Cter in SUMO2)" evidence="2">
    <location>
        <position position="1480"/>
    </location>
</feature>
<feature type="cross-link" description="Glycyl lysine isopeptide (Lys-Gly) (interchain with G-Cter in SUMO2)" evidence="2">
    <location>
        <position position="1488"/>
    </location>
</feature>